<reference key="1">
    <citation type="submission" date="2004-07" db="EMBL/GenBank/DDBJ databases">
        <title>Phylogeny of fucosyltransferases.</title>
        <authorList>
            <person name="Martinez-Duncker I."/>
            <person name="Oriol R."/>
            <person name="Mollicone R."/>
        </authorList>
    </citation>
    <scope>NUCLEOTIDE SEQUENCE [MRNA]</scope>
</reference>
<reference key="2">
    <citation type="journal article" date="2005" name="BMC Genomics">
        <title>Characterization of 954 bovine full-CDS cDNA sequences.</title>
        <authorList>
            <person name="Harhay G.P."/>
            <person name="Sonstegard T.S."/>
            <person name="Keele J.W."/>
            <person name="Heaton M.P."/>
            <person name="Clawson M.L."/>
            <person name="Snelling W.M."/>
            <person name="Wiedmann R.T."/>
            <person name="Van Tassell C.P."/>
            <person name="Smith T.P.L."/>
        </authorList>
    </citation>
    <scope>NUCLEOTIDE SEQUENCE [LARGE SCALE MRNA]</scope>
</reference>
<reference key="3">
    <citation type="submission" date="2007-07" db="EMBL/GenBank/DDBJ databases">
        <authorList>
            <consortium name="NIH - Mammalian Gene Collection (MGC) project"/>
        </authorList>
    </citation>
    <scope>NUCLEOTIDE SEQUENCE [LARGE SCALE MRNA]</scope>
    <source>
        <strain>Hereford</strain>
        <tissue>Thymus</tissue>
    </source>
</reference>
<reference key="4">
    <citation type="submission" date="2003-07" db="EMBL/GenBank/DDBJ databases">
        <title>Genomic organization and expression profile of putative alpha 1,3-fucosyltransferase genes, fut10 and fut11, in Bos taurus.</title>
        <authorList>
            <person name="Germot A."/>
            <person name="Dupuy F."/>
            <person name="Loriol C."/>
            <person name="Julien R."/>
            <person name="Maftah A."/>
        </authorList>
    </citation>
    <scope>NUCLEOTIDE SEQUENCE [MRNA] OF 17-478</scope>
</reference>
<dbReference type="EC" id="2.4.1.221" evidence="3"/>
<dbReference type="EC" id="2.4.1.-" evidence="2 3"/>
<dbReference type="EMBL" id="AJ786259">
    <property type="protein sequence ID" value="CAH05071.1"/>
    <property type="molecule type" value="mRNA"/>
</dbReference>
<dbReference type="EMBL" id="BT020712">
    <property type="protein sequence ID" value="AAX08729.1"/>
    <property type="molecule type" value="mRNA"/>
</dbReference>
<dbReference type="EMBL" id="BC147891">
    <property type="protein sequence ID" value="AAI47892.1"/>
    <property type="molecule type" value="mRNA"/>
</dbReference>
<dbReference type="EMBL" id="AY344579">
    <property type="protein sequence ID" value="AAQ02331.1"/>
    <property type="molecule type" value="mRNA"/>
</dbReference>
<dbReference type="RefSeq" id="NP_892032.1">
    <property type="nucleotide sequence ID" value="NM_182987.1"/>
</dbReference>
<dbReference type="SMR" id="Q6A198"/>
<dbReference type="FunCoup" id="Q6A198">
    <property type="interactions" value="122"/>
</dbReference>
<dbReference type="STRING" id="9913.ENSBTAP00000007176"/>
<dbReference type="CAZy" id="GT10">
    <property type="family name" value="Glycosyltransferase Family 10"/>
</dbReference>
<dbReference type="GlyCosmos" id="Q6A198">
    <property type="glycosylation" value="2 sites, No reported glycans"/>
</dbReference>
<dbReference type="GlyGen" id="Q6A198">
    <property type="glycosylation" value="2 sites"/>
</dbReference>
<dbReference type="PaxDb" id="9913-ENSBTAP00000007176"/>
<dbReference type="GeneID" id="360195"/>
<dbReference type="KEGG" id="bta:360195"/>
<dbReference type="CTD" id="84750"/>
<dbReference type="eggNOG" id="KOG2619">
    <property type="taxonomic scope" value="Eukaryota"/>
</dbReference>
<dbReference type="InParanoid" id="Q6A198"/>
<dbReference type="OrthoDB" id="9993460at2759"/>
<dbReference type="UniPathway" id="UPA00378"/>
<dbReference type="Proteomes" id="UP000009136">
    <property type="component" value="Unplaced"/>
</dbReference>
<dbReference type="GO" id="GO:0005783">
    <property type="term" value="C:endoplasmic reticulum"/>
    <property type="evidence" value="ECO:0000250"/>
    <property type="project" value="UniProtKB"/>
</dbReference>
<dbReference type="GO" id="GO:0005789">
    <property type="term" value="C:endoplasmic reticulum membrane"/>
    <property type="evidence" value="ECO:0007669"/>
    <property type="project" value="UniProtKB-SubCell"/>
</dbReference>
<dbReference type="GO" id="GO:0000139">
    <property type="term" value="C:Golgi membrane"/>
    <property type="evidence" value="ECO:0007669"/>
    <property type="project" value="InterPro"/>
</dbReference>
<dbReference type="GO" id="GO:0046920">
    <property type="term" value="F:alpha-(1-&gt;3)-fucosyltransferase activity"/>
    <property type="evidence" value="ECO:0000318"/>
    <property type="project" value="GO_Central"/>
</dbReference>
<dbReference type="GO" id="GO:0008417">
    <property type="term" value="F:fucosyltransferase activity"/>
    <property type="evidence" value="ECO:0000250"/>
    <property type="project" value="UniProtKB"/>
</dbReference>
<dbReference type="GO" id="GO:0046922">
    <property type="term" value="F:peptide-O-fucosyltransferase activity"/>
    <property type="evidence" value="ECO:0000250"/>
    <property type="project" value="UniProtKB"/>
</dbReference>
<dbReference type="GO" id="GO:0036065">
    <property type="term" value="P:fucosylation"/>
    <property type="evidence" value="ECO:0000318"/>
    <property type="project" value="GO_Central"/>
</dbReference>
<dbReference type="GO" id="GO:0036071">
    <property type="term" value="P:N-glycan fucosylation"/>
    <property type="evidence" value="ECO:0000250"/>
    <property type="project" value="UniProtKB"/>
</dbReference>
<dbReference type="GO" id="GO:0050714">
    <property type="term" value="P:positive regulation of protein secretion"/>
    <property type="evidence" value="ECO:0000250"/>
    <property type="project" value="UniProtKB"/>
</dbReference>
<dbReference type="FunFam" id="3.40.50.11660:FF:000002">
    <property type="entry name" value="Alpha-(1,3)-fucosyltransferase"/>
    <property type="match status" value="1"/>
</dbReference>
<dbReference type="Gene3D" id="3.40.50.11660">
    <property type="entry name" value="Glycosyl transferase family 10, C-terminal domain"/>
    <property type="match status" value="1"/>
</dbReference>
<dbReference type="InterPro" id="IPR017176">
    <property type="entry name" value="Alpha-1_3-FUT_met"/>
</dbReference>
<dbReference type="InterPro" id="IPR055270">
    <property type="entry name" value="Glyco_tran_10_C"/>
</dbReference>
<dbReference type="InterPro" id="IPR031481">
    <property type="entry name" value="Glyco_tran_10_N"/>
</dbReference>
<dbReference type="InterPro" id="IPR001503">
    <property type="entry name" value="Glyco_trans_10"/>
</dbReference>
<dbReference type="InterPro" id="IPR038577">
    <property type="entry name" value="GT10-like_C_sf"/>
</dbReference>
<dbReference type="PANTHER" id="PTHR11929">
    <property type="entry name" value="ALPHA- 1,3 -FUCOSYLTRANSFERASE"/>
    <property type="match status" value="1"/>
</dbReference>
<dbReference type="PANTHER" id="PTHR11929:SF194">
    <property type="entry name" value="ALPHA-(1,3)-FUCOSYLTRANSFERASE 10"/>
    <property type="match status" value="1"/>
</dbReference>
<dbReference type="Pfam" id="PF17039">
    <property type="entry name" value="Glyco_tran_10_N"/>
    <property type="match status" value="1"/>
</dbReference>
<dbReference type="Pfam" id="PF00852">
    <property type="entry name" value="Glyco_transf_10"/>
    <property type="match status" value="1"/>
</dbReference>
<dbReference type="PIRSF" id="PIRSF037332">
    <property type="entry name" value="Alpha1_3FUT_met"/>
    <property type="match status" value="1"/>
</dbReference>
<dbReference type="SUPFAM" id="SSF53756">
    <property type="entry name" value="UDP-Glycosyltransferase/glycogen phosphorylase"/>
    <property type="match status" value="1"/>
</dbReference>
<proteinExistence type="evidence at transcript level"/>
<accession>Q6A198</accession>
<accession>Q7YRE8</accession>
<evidence type="ECO:0000250" key="1">
    <source>
        <dbReference type="UniProtKB" id="Q11130"/>
    </source>
</evidence>
<evidence type="ECO:0000250" key="2">
    <source>
        <dbReference type="UniProtKB" id="Q5F2L2"/>
    </source>
</evidence>
<evidence type="ECO:0000250" key="3">
    <source>
        <dbReference type="UniProtKB" id="Q6P4F1"/>
    </source>
</evidence>
<evidence type="ECO:0000255" key="4"/>
<evidence type="ECO:0000305" key="5"/>
<gene>
    <name type="primary">FUT10</name>
    <name evidence="3" type="synonym">POFUT3</name>
</gene>
<keyword id="KW-1015">Disulfide bond</keyword>
<keyword id="KW-0256">Endoplasmic reticulum</keyword>
<keyword id="KW-0325">Glycoprotein</keyword>
<keyword id="KW-0328">Glycosyltransferase</keyword>
<keyword id="KW-0472">Membrane</keyword>
<keyword id="KW-1185">Reference proteome</keyword>
<keyword id="KW-0735">Signal-anchor</keyword>
<keyword id="KW-0808">Transferase</keyword>
<keyword id="KW-0812">Transmembrane</keyword>
<keyword id="KW-1133">Transmembrane helix</keyword>
<name>OFUT3_BOVIN</name>
<organism>
    <name type="scientific">Bos taurus</name>
    <name type="common">Bovine</name>
    <dbReference type="NCBI Taxonomy" id="9913"/>
    <lineage>
        <taxon>Eukaryota</taxon>
        <taxon>Metazoa</taxon>
        <taxon>Chordata</taxon>
        <taxon>Craniata</taxon>
        <taxon>Vertebrata</taxon>
        <taxon>Euteleostomi</taxon>
        <taxon>Mammalia</taxon>
        <taxon>Eutheria</taxon>
        <taxon>Laurasiatheria</taxon>
        <taxon>Artiodactyla</taxon>
        <taxon>Ruminantia</taxon>
        <taxon>Pecora</taxon>
        <taxon>Bovidae</taxon>
        <taxon>Bovinae</taxon>
        <taxon>Bos</taxon>
    </lineage>
</organism>
<comment type="function">
    <text evidence="2 3">Protein O-fucosyltransferase that specifically catalyzes O-fucosylation of serine or threonine residues in EMI domains of target proteins, such as MMRN1, MMRN2 and EMID1. Attaches fucose through an O-glycosidic linkage. O-fucosylation of EMI domain-containing proteins may be required for facilitating protein folding and secretion. May also show alpha-(1,3)-fucosyltransferase activity toward the innermost N-acetyl glucosamine (GlcNAc) residue in biantennary N-glycan acceptors. However, this was tested with a library of synthetic substrates and this activity is unsure in vivo (By similarity). May be involved in biosynthesis of Lewis X-carrying biantennary N-glycans that regulate neuron stem cell self-renewal during brain development (By similarity).</text>
</comment>
<comment type="catalytic activity">
    <reaction evidence="3">
        <text>L-threonyl-[protein] + GDP-beta-L-fucose = 3-O-(alpha-L-fucosyl)-L-threonyl-[protein] + GDP + H(+)</text>
        <dbReference type="Rhea" id="RHEA:70491"/>
        <dbReference type="Rhea" id="RHEA-COMP:11060"/>
        <dbReference type="Rhea" id="RHEA-COMP:17915"/>
        <dbReference type="ChEBI" id="CHEBI:15378"/>
        <dbReference type="ChEBI" id="CHEBI:30013"/>
        <dbReference type="ChEBI" id="CHEBI:57273"/>
        <dbReference type="ChEBI" id="CHEBI:58189"/>
        <dbReference type="ChEBI" id="CHEBI:189631"/>
        <dbReference type="EC" id="2.4.1.221"/>
    </reaction>
    <physiologicalReaction direction="left-to-right" evidence="3">
        <dbReference type="Rhea" id="RHEA:70492"/>
    </physiologicalReaction>
</comment>
<comment type="catalytic activity">
    <reaction evidence="3">
        <text>L-seryl-[protein] + GDP-beta-L-fucose = 3-O-(alpha-L-fucosyl)-L-seryl-[protein] + GDP + H(+)</text>
        <dbReference type="Rhea" id="RHEA:63644"/>
        <dbReference type="Rhea" id="RHEA-COMP:9863"/>
        <dbReference type="Rhea" id="RHEA-COMP:17914"/>
        <dbReference type="ChEBI" id="CHEBI:15378"/>
        <dbReference type="ChEBI" id="CHEBI:29999"/>
        <dbReference type="ChEBI" id="CHEBI:57273"/>
        <dbReference type="ChEBI" id="CHEBI:58189"/>
        <dbReference type="ChEBI" id="CHEBI:189632"/>
        <dbReference type="EC" id="2.4.1.221"/>
    </reaction>
    <physiologicalReaction direction="left-to-right" evidence="3">
        <dbReference type="Rhea" id="RHEA:63645"/>
    </physiologicalReaction>
</comment>
<comment type="pathway">
    <text evidence="3">Protein modification; protein glycosylation.</text>
</comment>
<comment type="subcellular location">
    <subcellularLocation>
        <location evidence="3">Endoplasmic reticulum membrane</location>
        <topology evidence="4">Single-pass type II membrane protein</topology>
    </subcellularLocation>
</comment>
<comment type="similarity">
    <text evidence="5">Belongs to the glycosyltransferase 10 family.</text>
</comment>
<sequence>MVRIQRGKLLAFCLCVMATVFLLITLQVVVELGKFEGKKFKNSHLKDGHAQMEAEPLHLHPFFNREGLTLNRKKTLAADSFPIMLWWSPLTGETGRLGQCGADACFFTINRTYLHHHRTKAFLFYGTDFSIDSLPLPRKAHHDWALFHEESPKNNYKLFHQPVITLFNYTATFSRHSHLPLTTQYLEGTEVLTSLRHLVPLRSKNHLRKSLAPLVYVQSDCDPPSDRDSYVRELMTYIEVDSYGECLRNKPLPPQLSNPASMDADGFFRILAQYKFILAFENAVCDDYITEKLWRPLKLGVVPVYYGSPSIADWLPSNRSAILVSEFSHPRELASYIRALDRDDRRYQAYIEWKLKGEISNQRLLTALRERKWGVQDVKQDNYIDAFECMVCTKVWDNIRLQEKGLPPKRWQADVTHLSCPEPTVFAFSPLVPRRRSLREMWIPSFQQSKKEARALRWLVDRNQNFSTQEFWALVFKD</sequence>
<feature type="chain" id="PRO_0000299000" description="GDP-fucose protein O-fucosyltransferase 3">
    <location>
        <begin position="1"/>
        <end position="478"/>
    </location>
</feature>
<feature type="topological domain" description="Cytoplasmic" evidence="4">
    <location>
        <begin position="1"/>
        <end position="9"/>
    </location>
</feature>
<feature type="transmembrane region" description="Helical; Signal-anchor for type II membrane protein" evidence="4">
    <location>
        <begin position="10"/>
        <end position="30"/>
    </location>
</feature>
<feature type="topological domain" description="Lumenal" evidence="4">
    <location>
        <begin position="31"/>
        <end position="478"/>
    </location>
</feature>
<feature type="glycosylation site" description="N-linked (GlcNAc...) asparagine" evidence="4">
    <location>
        <position position="110"/>
    </location>
</feature>
<feature type="glycosylation site" description="N-linked (GlcNAc...) asparagine" evidence="4">
    <location>
        <position position="168"/>
    </location>
</feature>
<feature type="disulfide bond" evidence="1">
    <location>
        <begin position="389"/>
        <end position="392"/>
    </location>
</feature>
<protein>
    <recommendedName>
        <fullName>GDP-fucose protein O-fucosyltransferase 3</fullName>
        <ecNumber evidence="3">2.4.1.221</ecNumber>
    </recommendedName>
    <alternativeName>
        <fullName>Alpha-(1,3)-fucosyltransferase 10</fullName>
        <ecNumber evidence="2 3">2.4.1.-</ecNumber>
    </alternativeName>
    <alternativeName>
        <fullName>Fucosyltransferase X</fullName>
        <shortName>Fuc-TX</shortName>
        <shortName>FucT-X</shortName>
    </alternativeName>
    <alternativeName>
        <fullName>Galactoside 3-L-fucosyltransferase 10</fullName>
        <shortName>Fucosyltransferase 10</shortName>
    </alternativeName>
</protein>